<name>EFTS_BORBU</name>
<protein>
    <recommendedName>
        <fullName>Elongation factor Ts</fullName>
        <shortName>EF-Ts</shortName>
    </recommendedName>
</protein>
<feature type="chain" id="PRO_0000161085" description="Elongation factor Ts">
    <location>
        <begin position="1"/>
        <end position="279"/>
    </location>
</feature>
<feature type="region of interest" description="Involved in Mg(2+) ion dislocation from EF-Tu" evidence="1">
    <location>
        <begin position="80"/>
        <end position="83"/>
    </location>
</feature>
<comment type="function">
    <text evidence="1">Associates with the EF-Tu.GDP complex and induces the exchange of GDP to GTP. It remains bound to the aminoacyl-tRNA.EF-Tu.GTP complex up to the GTP hydrolysis stage on the ribosome (By similarity).</text>
</comment>
<comment type="subcellular location">
    <subcellularLocation>
        <location evidence="1">Cytoplasm</location>
    </subcellularLocation>
</comment>
<comment type="similarity">
    <text evidence="2">Belongs to the EF-Ts family.</text>
</comment>
<reference key="1">
    <citation type="journal article" date="1997" name="Nature">
        <title>Genomic sequence of a Lyme disease spirochaete, Borrelia burgdorferi.</title>
        <authorList>
            <person name="Fraser C.M."/>
            <person name="Casjens S."/>
            <person name="Huang W.M."/>
            <person name="Sutton G.G."/>
            <person name="Clayton R.A."/>
            <person name="Lathigra R."/>
            <person name="White O."/>
            <person name="Ketchum K.A."/>
            <person name="Dodson R.J."/>
            <person name="Hickey E.K."/>
            <person name="Gwinn M.L."/>
            <person name="Dougherty B.A."/>
            <person name="Tomb J.-F."/>
            <person name="Fleischmann R.D."/>
            <person name="Richardson D.L."/>
            <person name="Peterson J.D."/>
            <person name="Kerlavage A.R."/>
            <person name="Quackenbush J."/>
            <person name="Salzberg S.L."/>
            <person name="Hanson M."/>
            <person name="van Vugt R."/>
            <person name="Palmer N."/>
            <person name="Adams M.D."/>
            <person name="Gocayne J.D."/>
            <person name="Weidman J.F."/>
            <person name="Utterback T.R."/>
            <person name="Watthey L."/>
            <person name="McDonald L.A."/>
            <person name="Artiach P."/>
            <person name="Bowman C."/>
            <person name="Garland S.A."/>
            <person name="Fujii C."/>
            <person name="Cotton M.D."/>
            <person name="Horst K."/>
            <person name="Roberts K.M."/>
            <person name="Hatch B."/>
            <person name="Smith H.O."/>
            <person name="Venter J.C."/>
        </authorList>
    </citation>
    <scope>NUCLEOTIDE SEQUENCE [LARGE SCALE GENOMIC DNA]</scope>
    <source>
        <strain>ATCC 35210 / DSM 4680 / CIP 102532 / B31</strain>
    </source>
</reference>
<accession>O51148</accession>
<organism>
    <name type="scientific">Borreliella burgdorferi (strain ATCC 35210 / DSM 4680 / CIP 102532 / B31)</name>
    <name type="common">Borrelia burgdorferi</name>
    <dbReference type="NCBI Taxonomy" id="224326"/>
    <lineage>
        <taxon>Bacteria</taxon>
        <taxon>Pseudomonadati</taxon>
        <taxon>Spirochaetota</taxon>
        <taxon>Spirochaetia</taxon>
        <taxon>Spirochaetales</taxon>
        <taxon>Borreliaceae</taxon>
        <taxon>Borreliella</taxon>
    </lineage>
</organism>
<keyword id="KW-0963">Cytoplasm</keyword>
<keyword id="KW-0251">Elongation factor</keyword>
<keyword id="KW-0648">Protein biosynthesis</keyword>
<keyword id="KW-1185">Reference proteome</keyword>
<dbReference type="EMBL" id="AE000783">
    <property type="protein sequence ID" value="AAC66512.1"/>
    <property type="molecule type" value="Genomic_DNA"/>
</dbReference>
<dbReference type="PIR" id="B70115">
    <property type="entry name" value="B70115"/>
</dbReference>
<dbReference type="RefSeq" id="NP_212256.1">
    <property type="nucleotide sequence ID" value="NC_001318.1"/>
</dbReference>
<dbReference type="RefSeq" id="WP_010889689.1">
    <property type="nucleotide sequence ID" value="NC_001318.1"/>
</dbReference>
<dbReference type="SMR" id="O51148"/>
<dbReference type="STRING" id="224326.BB_0122"/>
<dbReference type="PaxDb" id="224326-BB_0122"/>
<dbReference type="EnsemblBacteria" id="AAC66512">
    <property type="protein sequence ID" value="AAC66512"/>
    <property type="gene ID" value="BB_0122"/>
</dbReference>
<dbReference type="KEGG" id="bbu:BB_0122"/>
<dbReference type="PATRIC" id="fig|224326.49.peg.520"/>
<dbReference type="HOGENOM" id="CLU_047155_0_0_12"/>
<dbReference type="OrthoDB" id="9808348at2"/>
<dbReference type="Proteomes" id="UP000001807">
    <property type="component" value="Chromosome"/>
</dbReference>
<dbReference type="GO" id="GO:0005829">
    <property type="term" value="C:cytosol"/>
    <property type="evidence" value="ECO:0000314"/>
    <property type="project" value="CAFA"/>
</dbReference>
<dbReference type="GO" id="GO:0003746">
    <property type="term" value="F:translation elongation factor activity"/>
    <property type="evidence" value="ECO:0007669"/>
    <property type="project" value="UniProtKB-UniRule"/>
</dbReference>
<dbReference type="CDD" id="cd14275">
    <property type="entry name" value="UBA_EF-Ts"/>
    <property type="match status" value="1"/>
</dbReference>
<dbReference type="FunFam" id="1.10.8.10:FF:000001">
    <property type="entry name" value="Elongation factor Ts"/>
    <property type="match status" value="1"/>
</dbReference>
<dbReference type="Gene3D" id="1.10.286.20">
    <property type="match status" value="1"/>
</dbReference>
<dbReference type="Gene3D" id="1.10.8.10">
    <property type="entry name" value="DNA helicase RuvA subunit, C-terminal domain"/>
    <property type="match status" value="1"/>
</dbReference>
<dbReference type="Gene3D" id="3.30.479.20">
    <property type="entry name" value="Elongation factor Ts, dimerisation domain"/>
    <property type="match status" value="2"/>
</dbReference>
<dbReference type="HAMAP" id="MF_00050">
    <property type="entry name" value="EF_Ts"/>
    <property type="match status" value="1"/>
</dbReference>
<dbReference type="InterPro" id="IPR036402">
    <property type="entry name" value="EF-Ts_dimer_sf"/>
</dbReference>
<dbReference type="InterPro" id="IPR001816">
    <property type="entry name" value="Transl_elong_EFTs/EF1B"/>
</dbReference>
<dbReference type="InterPro" id="IPR014039">
    <property type="entry name" value="Transl_elong_EFTs/EF1B_dimer"/>
</dbReference>
<dbReference type="InterPro" id="IPR018101">
    <property type="entry name" value="Transl_elong_Ts_CS"/>
</dbReference>
<dbReference type="InterPro" id="IPR009060">
    <property type="entry name" value="UBA-like_sf"/>
</dbReference>
<dbReference type="NCBIfam" id="TIGR00116">
    <property type="entry name" value="tsf"/>
    <property type="match status" value="1"/>
</dbReference>
<dbReference type="PANTHER" id="PTHR11741">
    <property type="entry name" value="ELONGATION FACTOR TS"/>
    <property type="match status" value="1"/>
</dbReference>
<dbReference type="PANTHER" id="PTHR11741:SF0">
    <property type="entry name" value="ELONGATION FACTOR TS, MITOCHONDRIAL"/>
    <property type="match status" value="1"/>
</dbReference>
<dbReference type="Pfam" id="PF00889">
    <property type="entry name" value="EF_TS"/>
    <property type="match status" value="1"/>
</dbReference>
<dbReference type="SUPFAM" id="SSF54713">
    <property type="entry name" value="Elongation factor Ts (EF-Ts), dimerisation domain"/>
    <property type="match status" value="2"/>
</dbReference>
<dbReference type="SUPFAM" id="SSF46934">
    <property type="entry name" value="UBA-like"/>
    <property type="match status" value="1"/>
</dbReference>
<dbReference type="PROSITE" id="PS01126">
    <property type="entry name" value="EF_TS_1"/>
    <property type="match status" value="1"/>
</dbReference>
<dbReference type="PROSITE" id="PS01127">
    <property type="entry name" value="EF_TS_2"/>
    <property type="match status" value="1"/>
</dbReference>
<gene>
    <name type="primary">tsf</name>
    <name type="ordered locus">BB_0122</name>
</gene>
<sequence>MSIISPQDVKKLREETNAGFGDCKKALSVAGGDFELAKKKLREMGIASAEKRLDRDAKEGRVFSYSNNIYAGLLLVSCETDFVALNHNFVNFGNSLIKELVESGIDSLTTSQELELKNLAATIKENIQVKKIFITKIQSNEFVKIYLHGEQSKIGVLVKLKVNDFSKTEDKIFKNFAMDLALHVAAFAPVYLRNDDVCPNYIKEQEEIFTKQLESSGKPESIIKGIVAGKIKKHLAEISLLEQSFVKNDKITVKEMLEEISKAISSKVEMVEFKYLRIG</sequence>
<evidence type="ECO:0000250" key="1"/>
<evidence type="ECO:0000305" key="2"/>
<proteinExistence type="inferred from homology"/>